<protein>
    <recommendedName>
        <fullName evidence="1">Tol-Pal system protein TolB</fullName>
    </recommendedName>
</protein>
<gene>
    <name evidence="1" type="primary">tolB</name>
    <name type="ordered locus">BMEI0339</name>
</gene>
<organism>
    <name type="scientific">Brucella melitensis biotype 1 (strain ATCC 23456 / CCUG 17765 / NCTC 10094 / 16M)</name>
    <dbReference type="NCBI Taxonomy" id="224914"/>
    <lineage>
        <taxon>Bacteria</taxon>
        <taxon>Pseudomonadati</taxon>
        <taxon>Pseudomonadota</taxon>
        <taxon>Alphaproteobacteria</taxon>
        <taxon>Hyphomicrobiales</taxon>
        <taxon>Brucellaceae</taxon>
        <taxon>Brucella/Ochrobactrum group</taxon>
        <taxon>Brucella</taxon>
    </lineage>
</organism>
<comment type="function">
    <text evidence="1">Part of the Tol-Pal system, which plays a role in outer membrane invagination during cell division and is important for maintaining outer membrane integrity.</text>
</comment>
<comment type="subunit">
    <text evidence="1">The Tol-Pal system is composed of five core proteins: the inner membrane proteins TolA, TolQ and TolR, the periplasmic protein TolB and the outer membrane protein Pal. They form a network linking the inner and outer membranes and the peptidoglycan layer.</text>
</comment>
<comment type="subcellular location">
    <subcellularLocation>
        <location evidence="1">Periplasm</location>
    </subcellularLocation>
</comment>
<comment type="similarity">
    <text evidence="1">Belongs to the TolB family.</text>
</comment>
<name>TOLB_BRUME</name>
<evidence type="ECO:0000255" key="1">
    <source>
        <dbReference type="HAMAP-Rule" id="MF_00671"/>
    </source>
</evidence>
<feature type="signal peptide" evidence="1">
    <location>
        <begin position="1"/>
        <end position="33"/>
    </location>
</feature>
<feature type="chain" id="PRO_0000034630" description="Tol-Pal system protein TolB" evidence="1">
    <location>
        <begin position="34"/>
        <end position="443"/>
    </location>
</feature>
<dbReference type="EMBL" id="AF358662">
    <property type="protein sequence ID" value="AAK48918.1"/>
    <property type="molecule type" value="Genomic_DNA"/>
</dbReference>
<dbReference type="EMBL" id="AE008917">
    <property type="protein sequence ID" value="AAL51520.1"/>
    <property type="molecule type" value="Genomic_DNA"/>
</dbReference>
<dbReference type="PIR" id="AE3294">
    <property type="entry name" value="AE3294"/>
</dbReference>
<dbReference type="RefSeq" id="WP_004684149.1">
    <property type="nucleotide sequence ID" value="NC_003317.1"/>
</dbReference>
<dbReference type="SMR" id="Q93TG4"/>
<dbReference type="GeneID" id="29593087"/>
<dbReference type="KEGG" id="bme:BMEI0339"/>
<dbReference type="KEGG" id="bmel:DK63_1095"/>
<dbReference type="PATRIC" id="fig|224914.52.peg.1153"/>
<dbReference type="eggNOG" id="COG0823">
    <property type="taxonomic scope" value="Bacteria"/>
</dbReference>
<dbReference type="PhylomeDB" id="Q93TG4"/>
<dbReference type="Proteomes" id="UP000000419">
    <property type="component" value="Chromosome I"/>
</dbReference>
<dbReference type="GO" id="GO:0042597">
    <property type="term" value="C:periplasmic space"/>
    <property type="evidence" value="ECO:0007669"/>
    <property type="project" value="UniProtKB-SubCell"/>
</dbReference>
<dbReference type="GO" id="GO:0051301">
    <property type="term" value="P:cell division"/>
    <property type="evidence" value="ECO:0007669"/>
    <property type="project" value="UniProtKB-UniRule"/>
</dbReference>
<dbReference type="GO" id="GO:0017038">
    <property type="term" value="P:protein import"/>
    <property type="evidence" value="ECO:0007669"/>
    <property type="project" value="InterPro"/>
</dbReference>
<dbReference type="Gene3D" id="2.120.10.30">
    <property type="entry name" value="TolB, C-terminal domain"/>
    <property type="match status" value="1"/>
</dbReference>
<dbReference type="Gene3D" id="3.40.50.10070">
    <property type="entry name" value="TolB, N-terminal domain"/>
    <property type="match status" value="1"/>
</dbReference>
<dbReference type="HAMAP" id="MF_00671">
    <property type="entry name" value="TolB"/>
    <property type="match status" value="1"/>
</dbReference>
<dbReference type="InterPro" id="IPR011042">
    <property type="entry name" value="6-blade_b-propeller_TolB-like"/>
</dbReference>
<dbReference type="InterPro" id="IPR011659">
    <property type="entry name" value="PD40"/>
</dbReference>
<dbReference type="InterPro" id="IPR014167">
    <property type="entry name" value="Tol-Pal_TolB"/>
</dbReference>
<dbReference type="InterPro" id="IPR007195">
    <property type="entry name" value="TolB_N"/>
</dbReference>
<dbReference type="NCBIfam" id="TIGR02800">
    <property type="entry name" value="propeller_TolB"/>
    <property type="match status" value="1"/>
</dbReference>
<dbReference type="PANTHER" id="PTHR36842:SF1">
    <property type="entry name" value="PROTEIN TOLB"/>
    <property type="match status" value="1"/>
</dbReference>
<dbReference type="PANTHER" id="PTHR36842">
    <property type="entry name" value="PROTEIN TOLB HOMOLOG"/>
    <property type="match status" value="1"/>
</dbReference>
<dbReference type="Pfam" id="PF07676">
    <property type="entry name" value="PD40"/>
    <property type="match status" value="3"/>
</dbReference>
<dbReference type="Pfam" id="PF04052">
    <property type="entry name" value="TolB_N"/>
    <property type="match status" value="1"/>
</dbReference>
<dbReference type="SUPFAM" id="SSF52964">
    <property type="entry name" value="TolB, N-terminal domain"/>
    <property type="match status" value="1"/>
</dbReference>
<dbReference type="SUPFAM" id="SSF69304">
    <property type="entry name" value="Tricorn protease N-terminal domain"/>
    <property type="match status" value="1"/>
</dbReference>
<keyword id="KW-0131">Cell cycle</keyword>
<keyword id="KW-0132">Cell division</keyword>
<keyword id="KW-0574">Periplasm</keyword>
<keyword id="KW-0732">Signal</keyword>
<reference key="1">
    <citation type="submission" date="2001-03" db="EMBL/GenBank/DDBJ databases">
        <title>The tol-pal region in Brucella encodes homologs of the Tol-Pal system of E. coli.</title>
        <authorList>
            <person name="Tibor A."/>
            <person name="Aidant N."/>
            <person name="Letesson J.-J."/>
        </authorList>
    </citation>
    <scope>NUCLEOTIDE SEQUENCE [GENOMIC DNA]</scope>
    <source>
        <strain>ATCC 23456 / CCUG 17765 / NCTC 10094 / 16M</strain>
    </source>
</reference>
<reference key="2">
    <citation type="journal article" date="2002" name="Proc. Natl. Acad. Sci. U.S.A.">
        <title>The genome sequence of the facultative intracellular pathogen Brucella melitensis.</title>
        <authorList>
            <person name="DelVecchio V.G."/>
            <person name="Kapatral V."/>
            <person name="Redkar R.J."/>
            <person name="Patra G."/>
            <person name="Mujer C."/>
            <person name="Los T."/>
            <person name="Ivanova N."/>
            <person name="Anderson I."/>
            <person name="Bhattacharyya A."/>
            <person name="Lykidis A."/>
            <person name="Reznik G."/>
            <person name="Jablonski L."/>
            <person name="Larsen N."/>
            <person name="D'Souza M."/>
            <person name="Bernal A."/>
            <person name="Mazur M."/>
            <person name="Goltsman E."/>
            <person name="Selkov E."/>
            <person name="Elzer P.H."/>
            <person name="Hagius S."/>
            <person name="O'Callaghan D."/>
            <person name="Letesson J.-J."/>
            <person name="Haselkorn R."/>
            <person name="Kyrpides N.C."/>
            <person name="Overbeek R."/>
        </authorList>
    </citation>
    <scope>NUCLEOTIDE SEQUENCE [LARGE SCALE GENOMIC DNA]</scope>
    <source>
        <strain>ATCC 23456 / CCUG 17765 / NCTC 10094 / 16M</strain>
    </source>
</reference>
<accession>Q93TG4</accession>
<sequence length="443" mass="48501">MKIGIINTKIRTVFSAFACMIAASLVCTMPARAVVEININKGVIEPLPIAITDFLSADQLGSNITSVIAADLERSGLFAPIDTGAFIEKISNPDAAPRFEDWKVINAQALVTGRITKQPDGRLKAEFRLWDTFGGQQMIGQQFFTTPDNWRRVAHIIADAIYERLTGDKGYFDTRVVFVDESGPAQKRVKRLAIMDQDGANVRFISDGRALSLTPRFSPNRQEVTYMSFEGGSPKVYLLQLETGQRELVGNFPGMTIAPRFSPDGQKVVMSLLQDDGSANIYTMDLRNRTTTRLTSSQAIDTGASYSPDGSQIVFTSDRGGRPQLYVMGADGSNPRRISMGDGSYSTPVWSPRGDLIAFTKQSQGQFSIGVMKTDGSGERLLTSGFHNEGPTWAPNGRVLMFFRKAAGAGGPKLFTIDLTGRNERQIQTPNFASDPAWSPLLE</sequence>
<proteinExistence type="inferred from homology"/>